<feature type="chain" id="PRO_0000129760" description="Large ribosomal subunit protein uL2A">
    <location>
        <begin position="1"/>
        <end position="253"/>
    </location>
</feature>
<feature type="sequence conflict" description="In Ref. 1; CAA35971." evidence="3" ref="1">
    <original>I</original>
    <variation>S</variation>
    <location>
        <position position="135"/>
    </location>
</feature>
<accession>P0CT70</accession>
<accession>P08093</accession>
<accession>P14067</accession>
<accession>P36593</accession>
<accession>Q9UU31</accession>
<proteinExistence type="evidence at protein level"/>
<keyword id="KW-0002">3D-structure</keyword>
<keyword id="KW-0963">Cytoplasm</keyword>
<keyword id="KW-1185">Reference proteome</keyword>
<keyword id="KW-0687">Ribonucleoprotein</keyword>
<keyword id="KW-0689">Ribosomal protein</keyword>
<keyword id="KW-0694">RNA-binding</keyword>
<keyword id="KW-0699">rRNA-binding</keyword>
<protein>
    <recommendedName>
        <fullName evidence="3">Large ribosomal subunit protein uL2A</fullName>
    </recommendedName>
    <alternativeName>
        <fullName>60S ribosomal protein L2-A</fullName>
    </alternativeName>
    <alternativeName>
        <fullName>K37</fullName>
    </alternativeName>
    <alternativeName>
        <fullName>K5</fullName>
    </alternativeName>
    <alternativeName>
        <fullName>KD4</fullName>
    </alternativeName>
</protein>
<gene>
    <name type="primary">rpl801</name>
    <name type="synonym">rpk5</name>
    <name type="synonym">rpk5a</name>
    <name type="synonym">rpl2a</name>
    <name type="synonym">rpl8-1</name>
    <name type="ORF">SPAC1F7.13c</name>
    <name type="ORF">SPAC21E11.02</name>
</gene>
<sequence>MGRVIRAQRKSGGIFQAHTRLRKGAAQLRTLDFAERHGYIRGVVQKIIHDPGRGAPLAKVAFRNPYHYRTDVETFVATEGMYTGQFVYCGKNAALTVGNVLPVGEMPEGTIISNVEEKAGDRGALGRSSGNYVIIVGHDVDTGKTRVKLPSGAKKVVPSSARGVVGIVAGGGRIDKPLLKAGRAFHKYRVKRNCWPRTRGVAMNPVDHPHGGGNHQHVGHSTTVPRQSAPGQKVGLIAARRTGLLRGAAAVEN</sequence>
<dbReference type="EMBL" id="X51659">
    <property type="protein sequence ID" value="CAA35971.1"/>
    <property type="molecule type" value="Genomic_DNA"/>
</dbReference>
<dbReference type="EMBL" id="CU329670">
    <property type="protein sequence ID" value="CAA91960.2"/>
    <property type="molecule type" value="Genomic_DNA"/>
</dbReference>
<dbReference type="PIR" id="S07377">
    <property type="entry name" value="S07377"/>
</dbReference>
<dbReference type="PIR" id="T40711">
    <property type="entry name" value="R5ZPD4"/>
</dbReference>
<dbReference type="RefSeq" id="XP_001713102.1">
    <property type="nucleotide sequence ID" value="XM_001713050.2"/>
</dbReference>
<dbReference type="PDB" id="8EUG">
    <property type="method" value="EM"/>
    <property type="resolution" value="2.80 A"/>
    <property type="chains" value="A=1-253"/>
</dbReference>
<dbReference type="PDB" id="8EUI">
    <property type="method" value="EM"/>
    <property type="resolution" value="3.10 A"/>
    <property type="chains" value="A=1-253"/>
</dbReference>
<dbReference type="PDBsum" id="8EUG"/>
<dbReference type="PDBsum" id="8EUI"/>
<dbReference type="SMR" id="P0CT70"/>
<dbReference type="FunCoup" id="P0CT70">
    <property type="interactions" value="505"/>
</dbReference>
<dbReference type="STRING" id="284812.P0CT70"/>
<dbReference type="iPTMnet" id="P0CT70"/>
<dbReference type="PaxDb" id="4896-SPAC1F7.13c.1"/>
<dbReference type="EnsemblFungi" id="SPAC1F7.13c.1">
    <property type="protein sequence ID" value="SPAC1F7.13c.1:pep"/>
    <property type="gene ID" value="SPAC1F7.13c"/>
</dbReference>
<dbReference type="EnsemblFungi" id="SPBC2F12.07c.1">
    <property type="protein sequence ID" value="SPBC2F12.07c.1:pep"/>
    <property type="gene ID" value="SPBC2F12.07c"/>
</dbReference>
<dbReference type="EnsemblFungi" id="SPBC839.04.1">
    <property type="protein sequence ID" value="SPBC839.04.1:pep"/>
    <property type="gene ID" value="SPBC839.04"/>
</dbReference>
<dbReference type="KEGG" id="spo:2540366"/>
<dbReference type="KEGG" id="spo:2541191"/>
<dbReference type="PomBase" id="SPAC1F7.13c">
    <property type="gene designation" value="rpl801"/>
</dbReference>
<dbReference type="VEuPathDB" id="FungiDB:SPAC1F7.13c"/>
<dbReference type="VEuPathDB" id="FungiDB:SPBC2F12.07c"/>
<dbReference type="VEuPathDB" id="FungiDB:SPBC839.04"/>
<dbReference type="eggNOG" id="KOG2309">
    <property type="taxonomic scope" value="Eukaryota"/>
</dbReference>
<dbReference type="InParanoid" id="P0CT70"/>
<dbReference type="OMA" id="HPYKFKM"/>
<dbReference type="PhylomeDB" id="P0CT70"/>
<dbReference type="Reactome" id="R-SPO-156827">
    <property type="pathway name" value="L13a-mediated translational silencing of Ceruloplasmin expression"/>
</dbReference>
<dbReference type="Reactome" id="R-SPO-1799339">
    <property type="pathway name" value="SRP-dependent cotranslational protein targeting to membrane"/>
</dbReference>
<dbReference type="Reactome" id="R-SPO-72689">
    <property type="pathway name" value="Formation of a pool of free 40S subunits"/>
</dbReference>
<dbReference type="Reactome" id="R-SPO-72706">
    <property type="pathway name" value="GTP hydrolysis and joining of the 60S ribosomal subunit"/>
</dbReference>
<dbReference type="Reactome" id="R-SPO-975956">
    <property type="pathway name" value="Nonsense Mediated Decay (NMD) independent of the Exon Junction Complex (EJC)"/>
</dbReference>
<dbReference type="Reactome" id="R-SPO-975957">
    <property type="pathway name" value="Nonsense Mediated Decay (NMD) enhanced by the Exon Junction Complex (EJC)"/>
</dbReference>
<dbReference type="PRO" id="PR:P0CT70"/>
<dbReference type="Proteomes" id="UP000002485">
    <property type="component" value="Chromosome I"/>
</dbReference>
<dbReference type="GO" id="GO:0005829">
    <property type="term" value="C:cytosol"/>
    <property type="evidence" value="ECO:0007005"/>
    <property type="project" value="PomBase"/>
</dbReference>
<dbReference type="GO" id="GO:0022625">
    <property type="term" value="C:cytosolic large ribosomal subunit"/>
    <property type="evidence" value="ECO:0000318"/>
    <property type="project" value="GO_Central"/>
</dbReference>
<dbReference type="GO" id="GO:0003723">
    <property type="term" value="F:RNA binding"/>
    <property type="evidence" value="ECO:0000318"/>
    <property type="project" value="GO_Central"/>
</dbReference>
<dbReference type="GO" id="GO:0019843">
    <property type="term" value="F:rRNA binding"/>
    <property type="evidence" value="ECO:0000255"/>
    <property type="project" value="PomBase"/>
</dbReference>
<dbReference type="GO" id="GO:0003735">
    <property type="term" value="F:structural constituent of ribosome"/>
    <property type="evidence" value="ECO:0000318"/>
    <property type="project" value="GO_Central"/>
</dbReference>
<dbReference type="GO" id="GO:0002181">
    <property type="term" value="P:cytoplasmic translation"/>
    <property type="evidence" value="ECO:0000318"/>
    <property type="project" value="GO_Central"/>
</dbReference>
<dbReference type="FunFam" id="2.40.50.140:FF:000020">
    <property type="entry name" value="60S ribosomal protein L2"/>
    <property type="match status" value="1"/>
</dbReference>
<dbReference type="FunFam" id="4.10.950.10:FF:000002">
    <property type="entry name" value="60S ribosomal protein L2"/>
    <property type="match status" value="1"/>
</dbReference>
<dbReference type="FunFam" id="2.30.30.30:FF:000006">
    <property type="entry name" value="60S ribosomal protein L8"/>
    <property type="match status" value="1"/>
</dbReference>
<dbReference type="Gene3D" id="2.30.30.30">
    <property type="match status" value="1"/>
</dbReference>
<dbReference type="Gene3D" id="2.40.50.140">
    <property type="entry name" value="Nucleic acid-binding proteins"/>
    <property type="match status" value="1"/>
</dbReference>
<dbReference type="Gene3D" id="4.10.950.10">
    <property type="entry name" value="Ribosomal protein L2, domain 3"/>
    <property type="match status" value="1"/>
</dbReference>
<dbReference type="InterPro" id="IPR012340">
    <property type="entry name" value="NA-bd_OB-fold"/>
</dbReference>
<dbReference type="InterPro" id="IPR014722">
    <property type="entry name" value="Rib_uL2_dom2"/>
</dbReference>
<dbReference type="InterPro" id="IPR002171">
    <property type="entry name" value="Ribosomal_uL2"/>
</dbReference>
<dbReference type="InterPro" id="IPR022669">
    <property type="entry name" value="Ribosomal_uL2_C"/>
</dbReference>
<dbReference type="InterPro" id="IPR022671">
    <property type="entry name" value="Ribosomal_uL2_CS"/>
</dbReference>
<dbReference type="InterPro" id="IPR014726">
    <property type="entry name" value="Ribosomal_uL2_dom3"/>
</dbReference>
<dbReference type="InterPro" id="IPR022666">
    <property type="entry name" value="Ribosomal_uL2_RNA-bd_dom"/>
</dbReference>
<dbReference type="InterPro" id="IPR008991">
    <property type="entry name" value="Translation_prot_SH3-like_sf"/>
</dbReference>
<dbReference type="PANTHER" id="PTHR13691:SF16">
    <property type="entry name" value="LARGE RIBOSOMAL SUBUNIT PROTEIN UL2"/>
    <property type="match status" value="1"/>
</dbReference>
<dbReference type="PANTHER" id="PTHR13691">
    <property type="entry name" value="RIBOSOMAL PROTEIN L2"/>
    <property type="match status" value="1"/>
</dbReference>
<dbReference type="Pfam" id="PF00181">
    <property type="entry name" value="Ribosomal_L2"/>
    <property type="match status" value="1"/>
</dbReference>
<dbReference type="Pfam" id="PF03947">
    <property type="entry name" value="Ribosomal_L2_C"/>
    <property type="match status" value="1"/>
</dbReference>
<dbReference type="PIRSF" id="PIRSF002158">
    <property type="entry name" value="Ribosomal_L2"/>
    <property type="match status" value="1"/>
</dbReference>
<dbReference type="SMART" id="SM01383">
    <property type="entry name" value="Ribosomal_L2"/>
    <property type="match status" value="1"/>
</dbReference>
<dbReference type="SMART" id="SM01382">
    <property type="entry name" value="Ribosomal_L2_C"/>
    <property type="match status" value="1"/>
</dbReference>
<dbReference type="SUPFAM" id="SSF50249">
    <property type="entry name" value="Nucleic acid-binding proteins"/>
    <property type="match status" value="1"/>
</dbReference>
<dbReference type="SUPFAM" id="SSF50104">
    <property type="entry name" value="Translation proteins SH3-like domain"/>
    <property type="match status" value="1"/>
</dbReference>
<dbReference type="PROSITE" id="PS00467">
    <property type="entry name" value="RIBOSOMAL_L2"/>
    <property type="match status" value="1"/>
</dbReference>
<organism>
    <name type="scientific">Schizosaccharomyces pombe (strain 972 / ATCC 24843)</name>
    <name type="common">Fission yeast</name>
    <dbReference type="NCBI Taxonomy" id="284812"/>
    <lineage>
        <taxon>Eukaryota</taxon>
        <taxon>Fungi</taxon>
        <taxon>Dikarya</taxon>
        <taxon>Ascomycota</taxon>
        <taxon>Taphrinomycotina</taxon>
        <taxon>Schizosaccharomycetes</taxon>
        <taxon>Schizosaccharomycetales</taxon>
        <taxon>Schizosaccharomycetaceae</taxon>
        <taxon>Schizosaccharomyces</taxon>
    </lineage>
</organism>
<name>RL2A_SCHPO</name>
<evidence type="ECO:0000250" key="1">
    <source>
        <dbReference type="UniProtKB" id="P0CX45"/>
    </source>
</evidence>
<evidence type="ECO:0000269" key="2">
    <source>
    </source>
</evidence>
<evidence type="ECO:0000305" key="3"/>
<reference key="1">
    <citation type="journal article" date="1989" name="Curr. Genet.">
        <title>A ribosomal protein gene family from Schizosaccharomyces pombe consisting of three active members.</title>
        <authorList>
            <person name="Gatermann K.B."/>
            <person name="Teletski C."/>
            <person name="Gross T."/>
            <person name="Kaeufer N.F."/>
        </authorList>
    </citation>
    <scope>NUCLEOTIDE SEQUENCE [GENOMIC DNA]</scope>
</reference>
<reference key="2">
    <citation type="journal article" date="2002" name="Nature">
        <title>The genome sequence of Schizosaccharomyces pombe.</title>
        <authorList>
            <person name="Wood V."/>
            <person name="Gwilliam R."/>
            <person name="Rajandream M.A."/>
            <person name="Lyne M.H."/>
            <person name="Lyne R."/>
            <person name="Stewart A."/>
            <person name="Sgouros J.G."/>
            <person name="Peat N."/>
            <person name="Hayles J."/>
            <person name="Baker S.G."/>
            <person name="Basham D."/>
            <person name="Bowman S."/>
            <person name="Brooks K."/>
            <person name="Brown D."/>
            <person name="Brown S."/>
            <person name="Chillingworth T."/>
            <person name="Churcher C.M."/>
            <person name="Collins M."/>
            <person name="Connor R."/>
            <person name="Cronin A."/>
            <person name="Davis P."/>
            <person name="Feltwell T."/>
            <person name="Fraser A."/>
            <person name="Gentles S."/>
            <person name="Goble A."/>
            <person name="Hamlin N."/>
            <person name="Harris D.E."/>
            <person name="Hidalgo J."/>
            <person name="Hodgson G."/>
            <person name="Holroyd S."/>
            <person name="Hornsby T."/>
            <person name="Howarth S."/>
            <person name="Huckle E.J."/>
            <person name="Hunt S."/>
            <person name="Jagels K."/>
            <person name="James K.D."/>
            <person name="Jones L."/>
            <person name="Jones M."/>
            <person name="Leather S."/>
            <person name="McDonald S."/>
            <person name="McLean J."/>
            <person name="Mooney P."/>
            <person name="Moule S."/>
            <person name="Mungall K.L."/>
            <person name="Murphy L.D."/>
            <person name="Niblett D."/>
            <person name="Odell C."/>
            <person name="Oliver K."/>
            <person name="O'Neil S."/>
            <person name="Pearson D."/>
            <person name="Quail M.A."/>
            <person name="Rabbinowitsch E."/>
            <person name="Rutherford K.M."/>
            <person name="Rutter S."/>
            <person name="Saunders D."/>
            <person name="Seeger K."/>
            <person name="Sharp S."/>
            <person name="Skelton J."/>
            <person name="Simmonds M.N."/>
            <person name="Squares R."/>
            <person name="Squares S."/>
            <person name="Stevens K."/>
            <person name="Taylor K."/>
            <person name="Taylor R.G."/>
            <person name="Tivey A."/>
            <person name="Walsh S.V."/>
            <person name="Warren T."/>
            <person name="Whitehead S."/>
            <person name="Woodward J.R."/>
            <person name="Volckaert G."/>
            <person name="Aert R."/>
            <person name="Robben J."/>
            <person name="Grymonprez B."/>
            <person name="Weltjens I."/>
            <person name="Vanstreels E."/>
            <person name="Rieger M."/>
            <person name="Schaefer M."/>
            <person name="Mueller-Auer S."/>
            <person name="Gabel C."/>
            <person name="Fuchs M."/>
            <person name="Duesterhoeft A."/>
            <person name="Fritzc C."/>
            <person name="Holzer E."/>
            <person name="Moestl D."/>
            <person name="Hilbert H."/>
            <person name="Borzym K."/>
            <person name="Langer I."/>
            <person name="Beck A."/>
            <person name="Lehrach H."/>
            <person name="Reinhardt R."/>
            <person name="Pohl T.M."/>
            <person name="Eger P."/>
            <person name="Zimmermann W."/>
            <person name="Wedler H."/>
            <person name="Wambutt R."/>
            <person name="Purnelle B."/>
            <person name="Goffeau A."/>
            <person name="Cadieu E."/>
            <person name="Dreano S."/>
            <person name="Gloux S."/>
            <person name="Lelaure V."/>
            <person name="Mottier S."/>
            <person name="Galibert F."/>
            <person name="Aves S.J."/>
            <person name="Xiang Z."/>
            <person name="Hunt C."/>
            <person name="Moore K."/>
            <person name="Hurst S.M."/>
            <person name="Lucas M."/>
            <person name="Rochet M."/>
            <person name="Gaillardin C."/>
            <person name="Tallada V.A."/>
            <person name="Garzon A."/>
            <person name="Thode G."/>
            <person name="Daga R.R."/>
            <person name="Cruzado L."/>
            <person name="Jimenez J."/>
            <person name="Sanchez M."/>
            <person name="del Rey F."/>
            <person name="Benito J."/>
            <person name="Dominguez A."/>
            <person name="Revuelta J.L."/>
            <person name="Moreno S."/>
            <person name="Armstrong J."/>
            <person name="Forsburg S.L."/>
            <person name="Cerutti L."/>
            <person name="Lowe T."/>
            <person name="McCombie W.R."/>
            <person name="Paulsen I."/>
            <person name="Potashkin J."/>
            <person name="Shpakovski G.V."/>
            <person name="Ussery D."/>
            <person name="Barrell B.G."/>
            <person name="Nurse P."/>
        </authorList>
    </citation>
    <scope>NUCLEOTIDE SEQUENCE [LARGE SCALE GENOMIC DNA]</scope>
    <source>
        <strain>972 / ATCC 24843</strain>
    </source>
</reference>
<reference key="3">
    <citation type="journal article" date="2006" name="Nat. Biotechnol.">
        <title>ORFeome cloning and global analysis of protein localization in the fission yeast Schizosaccharomyces pombe.</title>
        <authorList>
            <person name="Matsuyama A."/>
            <person name="Arai R."/>
            <person name="Yashiroda Y."/>
            <person name="Shirai A."/>
            <person name="Kamata A."/>
            <person name="Sekido S."/>
            <person name="Kobayashi Y."/>
            <person name="Hashimoto A."/>
            <person name="Hamamoto M."/>
            <person name="Hiraoka Y."/>
            <person name="Horinouchi S."/>
            <person name="Yoshida M."/>
        </authorList>
    </citation>
    <scope>SUBCELLULAR LOCATION [LARGE SCALE ANALYSIS]</scope>
</reference>
<comment type="function">
    <text evidence="1">Component of the ribosome, a large ribonucleoprotein complex responsible for the synthesis of proteins in the cell. The small ribosomal subunit (SSU) binds messenger RNAs (mRNAs) and translates the encoded message by selecting cognate aminoacyl-transfer RNA (tRNA) molecules. The large subunit (LSU) contains the ribosomal catalytic site termed the peptidyl transferase center (PTC), which catalyzes the formation of peptide bonds, thereby polymerizing the amino acids delivered by tRNAs into a polypeptide chain. The nascent polypeptides leave the ribosome through a tunnel in the LSU and interact with protein factors that function in enzymatic processing, targeting, and the membrane insertion of nascent chains at the exit of the ribosomal tunnel.</text>
</comment>
<comment type="subunit">
    <text evidence="1">Component of the large ribosomal subunit (LSU). Mature yeast ribosomes consist of a small (40S) and a large (60S) subunit. The 40S small subunit contains 1 molecule of ribosomal RNA (18S rRNA) and at least 33 different proteins. The large 60S subunit contains 3 rRNA molecules (25S, 5.8S and 5S rRNA) and at least 46 different proteins.</text>
</comment>
<comment type="subcellular location">
    <subcellularLocation>
        <location evidence="2">Cytoplasm</location>
    </subcellularLocation>
</comment>
<comment type="miscellaneous">
    <text>There are 3 genes for uL2 in S.pombe.</text>
</comment>
<comment type="similarity">
    <text evidence="3">Belongs to the universal ribosomal protein uL2 family.</text>
</comment>